<protein>
    <recommendedName>
        <fullName>G2/mitotic-specific cyclin-B1</fullName>
    </recommendedName>
</protein>
<feature type="chain" id="PRO_0000080380" description="G2/mitotic-specific cyclin-B1">
    <location>
        <begin position="1"/>
        <end position="361"/>
    </location>
</feature>
<feature type="region of interest" description="Disordered" evidence="2">
    <location>
        <begin position="1"/>
        <end position="33"/>
    </location>
</feature>
<feature type="compositionally biased region" description="Polar residues" evidence="2">
    <location>
        <begin position="1"/>
        <end position="13"/>
    </location>
</feature>
<organism>
    <name type="scientific">Caenorhabditis elegans</name>
    <dbReference type="NCBI Taxonomy" id="6239"/>
    <lineage>
        <taxon>Eukaryota</taxon>
        <taxon>Metazoa</taxon>
        <taxon>Ecdysozoa</taxon>
        <taxon>Nematoda</taxon>
        <taxon>Chromadorea</taxon>
        <taxon>Rhabditida</taxon>
        <taxon>Rhabditina</taxon>
        <taxon>Rhabditomorpha</taxon>
        <taxon>Rhabditoidea</taxon>
        <taxon>Rhabditidae</taxon>
        <taxon>Peloderinae</taxon>
        <taxon>Caenorhabditis</taxon>
    </lineage>
</organism>
<comment type="function">
    <text evidence="1">Essential for the control of the cell cycle at the G2/M (mitosis) transition.</text>
</comment>
<comment type="subunit">
    <text evidence="1 3">Interacts with the CDK1 protein kinase to form a serine/threonine kinase holoenzyme complex also known as maturation promoting factor (MPF) (By similarity). The cyclin subunit imparts substrate specificity to the complex (By similarity). Interacts with E3 ubiquitin-protein ligase etc-1 (PubMed:23578927).</text>
</comment>
<comment type="interaction">
    <interactant intactId="EBI-330851">
        <id>Q10653</id>
    </interactant>
    <interactant intactId="EBI-330810">
        <id>Q9U2G4</id>
        <label>puf-3</label>
    </interactant>
    <organismsDiffer>false</organismsDiffer>
    <experiments>3</experiments>
</comment>
<comment type="subcellular location">
    <subcellularLocation>
        <location evidence="3">Cytoplasm</location>
    </subcellularLocation>
</comment>
<comment type="developmental stage">
    <text evidence="3">Expressed in mature oocytes followed by a severe reduction in protein levels as meiotic division progresses (PubMed:23578927).</text>
</comment>
<comment type="PTM">
    <text evidence="3">Ubiquitinated by etc-1 likely during meiosis, resulting in its degradation.</text>
</comment>
<comment type="similarity">
    <text evidence="4">Belongs to the cyclin family. Cyclin AB subfamily.</text>
</comment>
<accession>Q10653</accession>
<evidence type="ECO:0000250" key="1">
    <source>
        <dbReference type="UniProtKB" id="P14635"/>
    </source>
</evidence>
<evidence type="ECO:0000256" key="2">
    <source>
        <dbReference type="SAM" id="MobiDB-lite"/>
    </source>
</evidence>
<evidence type="ECO:0000269" key="3">
    <source>
    </source>
</evidence>
<evidence type="ECO:0000305" key="4"/>
<gene>
    <name type="primary">cyb-1</name>
    <name type="ORF">ZC168.4</name>
</gene>
<proteinExistence type="evidence at protein level"/>
<dbReference type="EMBL" id="U20903">
    <property type="protein sequence ID" value="AAA84394.1"/>
    <property type="molecule type" value="mRNA"/>
</dbReference>
<dbReference type="EMBL" id="Z70312">
    <property type="protein sequence ID" value="CAA94384.1"/>
    <property type="molecule type" value="Genomic_DNA"/>
</dbReference>
<dbReference type="PIR" id="T27504">
    <property type="entry name" value="T27504"/>
</dbReference>
<dbReference type="RefSeq" id="NP_501987.1">
    <property type="nucleotide sequence ID" value="NM_069586.9"/>
</dbReference>
<dbReference type="SMR" id="Q10653"/>
<dbReference type="BioGRID" id="43066">
    <property type="interactions" value="4"/>
</dbReference>
<dbReference type="FunCoup" id="Q10653">
    <property type="interactions" value="780"/>
</dbReference>
<dbReference type="IntAct" id="Q10653">
    <property type="interactions" value="2"/>
</dbReference>
<dbReference type="STRING" id="6239.ZC168.4.3"/>
<dbReference type="PaxDb" id="6239-ZC168.4.2"/>
<dbReference type="PeptideAtlas" id="Q10653"/>
<dbReference type="EnsemblMetazoa" id="ZC168.4.1">
    <property type="protein sequence ID" value="ZC168.4.1"/>
    <property type="gene ID" value="WBGene00000865"/>
</dbReference>
<dbReference type="EnsemblMetazoa" id="ZC168.4.2">
    <property type="protein sequence ID" value="ZC168.4.2"/>
    <property type="gene ID" value="WBGene00000865"/>
</dbReference>
<dbReference type="GeneID" id="177965"/>
<dbReference type="KEGG" id="cel:CELE_ZC168.4"/>
<dbReference type="UCSC" id="ZC168.4.2">
    <property type="organism name" value="c. elegans"/>
</dbReference>
<dbReference type="AGR" id="WB:WBGene00000865"/>
<dbReference type="CTD" id="177965"/>
<dbReference type="WormBase" id="ZC168.4">
    <property type="protein sequence ID" value="CE06570"/>
    <property type="gene ID" value="WBGene00000865"/>
    <property type="gene designation" value="cyb-1"/>
</dbReference>
<dbReference type="eggNOG" id="KOG0653">
    <property type="taxonomic scope" value="Eukaryota"/>
</dbReference>
<dbReference type="GeneTree" id="ENSGT00940000168350"/>
<dbReference type="HOGENOM" id="CLU_020695_2_0_1"/>
<dbReference type="InParanoid" id="Q10653"/>
<dbReference type="OMA" id="SINANMR"/>
<dbReference type="OrthoDB" id="5590282at2759"/>
<dbReference type="PhylomeDB" id="Q10653"/>
<dbReference type="Reactome" id="R-CEL-2299718">
    <property type="pathway name" value="Condensation of Prophase Chromosomes"/>
</dbReference>
<dbReference type="Reactome" id="R-CEL-2500257">
    <property type="pathway name" value="Resolution of Sister Chromatid Cohesion"/>
</dbReference>
<dbReference type="Reactome" id="R-CEL-2565942">
    <property type="pathway name" value="Regulation of PLK1 Activity at G2/M Transition"/>
</dbReference>
<dbReference type="Reactome" id="R-CEL-2980767">
    <property type="pathway name" value="Activation of NIMA Kinases NEK9, NEK6, NEK7"/>
</dbReference>
<dbReference type="Reactome" id="R-CEL-4419969">
    <property type="pathway name" value="Depolymerization of the Nuclear Lamina"/>
</dbReference>
<dbReference type="Reactome" id="R-CEL-6804114">
    <property type="pathway name" value="TP53 Regulates Transcription of Genes Involved in G2 Cell Cycle Arrest"/>
</dbReference>
<dbReference type="Reactome" id="R-CEL-69273">
    <property type="pathway name" value="Cyclin A/B1/B2 associated events during G2/M transition"/>
</dbReference>
<dbReference type="Reactome" id="R-CEL-69478">
    <property type="pathway name" value="G2/M DNA replication checkpoint"/>
</dbReference>
<dbReference type="Reactome" id="R-CEL-8878166">
    <property type="pathway name" value="Transcriptional regulation by RUNX2"/>
</dbReference>
<dbReference type="SignaLink" id="Q10653"/>
<dbReference type="PRO" id="PR:Q10653"/>
<dbReference type="Proteomes" id="UP000001940">
    <property type="component" value="Chromosome IV"/>
</dbReference>
<dbReference type="Bgee" id="WBGene00000865">
    <property type="expression patterns" value="Expressed in germ line (C elegans) and 4 other cell types or tissues"/>
</dbReference>
<dbReference type="GO" id="GO:0000307">
    <property type="term" value="C:cyclin-dependent protein kinase holoenzyme complex"/>
    <property type="evidence" value="ECO:0000318"/>
    <property type="project" value="GO_Central"/>
</dbReference>
<dbReference type="GO" id="GO:0005737">
    <property type="term" value="C:cytoplasm"/>
    <property type="evidence" value="ECO:0000314"/>
    <property type="project" value="UniProtKB"/>
</dbReference>
<dbReference type="GO" id="GO:0005815">
    <property type="term" value="C:microtubule organizing center"/>
    <property type="evidence" value="ECO:0000318"/>
    <property type="project" value="GO_Central"/>
</dbReference>
<dbReference type="GO" id="GO:0005634">
    <property type="term" value="C:nucleus"/>
    <property type="evidence" value="ECO:0000314"/>
    <property type="project" value="WormBase"/>
</dbReference>
<dbReference type="GO" id="GO:0016538">
    <property type="term" value="F:cyclin-dependent protein serine/threonine kinase regulator activity"/>
    <property type="evidence" value="ECO:0000314"/>
    <property type="project" value="WormBase"/>
</dbReference>
<dbReference type="GO" id="GO:0031625">
    <property type="term" value="F:ubiquitin protein ligase binding"/>
    <property type="evidence" value="ECO:0000353"/>
    <property type="project" value="UniProtKB"/>
</dbReference>
<dbReference type="GO" id="GO:0051301">
    <property type="term" value="P:cell division"/>
    <property type="evidence" value="ECO:0007669"/>
    <property type="project" value="UniProtKB-KW"/>
</dbReference>
<dbReference type="GO" id="GO:0000082">
    <property type="term" value="P:G1/S transition of mitotic cell cycle"/>
    <property type="evidence" value="ECO:0000318"/>
    <property type="project" value="GO_Central"/>
</dbReference>
<dbReference type="GO" id="GO:0000278">
    <property type="term" value="P:mitotic cell cycle"/>
    <property type="evidence" value="ECO:0000315"/>
    <property type="project" value="WormBase"/>
</dbReference>
<dbReference type="GO" id="GO:0001556">
    <property type="term" value="P:oocyte maturation"/>
    <property type="evidence" value="ECO:0000316"/>
    <property type="project" value="WormBase"/>
</dbReference>
<dbReference type="GO" id="GO:0001934">
    <property type="term" value="P:positive regulation of protein phosphorylation"/>
    <property type="evidence" value="ECO:0000314"/>
    <property type="project" value="WormBase"/>
</dbReference>
<dbReference type="CDD" id="cd20507">
    <property type="entry name" value="CYCLIN_CCNB1-like_rpt1"/>
    <property type="match status" value="1"/>
</dbReference>
<dbReference type="FunFam" id="1.10.472.10:FF:000229">
    <property type="entry name" value="CYclin B"/>
    <property type="match status" value="1"/>
</dbReference>
<dbReference type="Gene3D" id="1.10.472.10">
    <property type="entry name" value="Cyclin-like"/>
    <property type="match status" value="2"/>
</dbReference>
<dbReference type="InterPro" id="IPR039361">
    <property type="entry name" value="Cyclin"/>
</dbReference>
<dbReference type="InterPro" id="IPR013763">
    <property type="entry name" value="Cyclin-like_dom"/>
</dbReference>
<dbReference type="InterPro" id="IPR036915">
    <property type="entry name" value="Cyclin-like_sf"/>
</dbReference>
<dbReference type="InterPro" id="IPR004367">
    <property type="entry name" value="Cyclin_C-dom"/>
</dbReference>
<dbReference type="InterPro" id="IPR006671">
    <property type="entry name" value="Cyclin_N"/>
</dbReference>
<dbReference type="InterPro" id="IPR048258">
    <property type="entry name" value="Cyclins_cyclin-box"/>
</dbReference>
<dbReference type="PANTHER" id="PTHR10177">
    <property type="entry name" value="CYCLINS"/>
    <property type="match status" value="1"/>
</dbReference>
<dbReference type="Pfam" id="PF02984">
    <property type="entry name" value="Cyclin_C"/>
    <property type="match status" value="1"/>
</dbReference>
<dbReference type="Pfam" id="PF00134">
    <property type="entry name" value="Cyclin_N"/>
    <property type="match status" value="1"/>
</dbReference>
<dbReference type="SMART" id="SM00385">
    <property type="entry name" value="CYCLIN"/>
    <property type="match status" value="1"/>
</dbReference>
<dbReference type="SMART" id="SM01332">
    <property type="entry name" value="Cyclin_C"/>
    <property type="match status" value="1"/>
</dbReference>
<dbReference type="SUPFAM" id="SSF47954">
    <property type="entry name" value="Cyclin-like"/>
    <property type="match status" value="2"/>
</dbReference>
<dbReference type="PROSITE" id="PS00292">
    <property type="entry name" value="CYCLINS"/>
    <property type="match status" value="1"/>
</dbReference>
<name>CCNB1_CAEEL</name>
<keyword id="KW-0131">Cell cycle</keyword>
<keyword id="KW-0132">Cell division</keyword>
<keyword id="KW-0195">Cyclin</keyword>
<keyword id="KW-0963">Cytoplasm</keyword>
<keyword id="KW-0498">Mitosis</keyword>
<keyword id="KW-1185">Reference proteome</keyword>
<keyword id="KW-0832">Ubl conjugation</keyword>
<sequence>MLRATNNRRTSNNVEKDSLQMAKHGNGPLKPVNAQGLQTKREAREILALKPSNPAPVETAQKSQRINLQDAETKCLAMADDIYKYLVHHEKKYLLEECFMEGGEPTPKMRRILVDWLVQVHVRFHLTPETLHLTVFILDRMLQKKVTSKADLQLLGISAMFVASKFEEVYLPDIHDYEFITENTYSKKQILAMEQTILNSLNFDLSCPSSLVFLRCLSRILSENDASPIDNQAFCYTYNISKCLGELALLDSVMASTPRSHIASASMIIALEVHPVDGIEAENAVSVICKQLGASKKVIEDAVALLAEVSYKNFKQGKLVAIKNKYQSSKLAQVSNLMTDDVLEKINRMGQNAKVDASEME</sequence>
<reference key="1">
    <citation type="journal article" date="1995" name="J. Cell Sci.">
        <title>Caenorhabditis elegans cyclin A- and B-type genes: a cyclin A multigene family, an ancestral cyclin B3 and differential germline expression.</title>
        <authorList>
            <person name="Kreutzer M.A."/>
            <person name="Richards J.P."/>
            <person name="de Silva-Udawatta M.N."/>
            <person name="Temenak J.J."/>
            <person name="Knoblich J.A."/>
            <person name="Lehner C.F."/>
            <person name="Bennett K.L."/>
        </authorList>
    </citation>
    <scope>NUCLEOTIDE SEQUENCE [MRNA]</scope>
    <source>
        <strain>Bristol N2</strain>
    </source>
</reference>
<reference key="2">
    <citation type="journal article" date="1998" name="Science">
        <title>Genome sequence of the nematode C. elegans: a platform for investigating biology.</title>
        <authorList>
            <consortium name="The C. elegans sequencing consortium"/>
        </authorList>
    </citation>
    <scope>NUCLEOTIDE SEQUENCE [LARGE SCALE GENOMIC DNA]</scope>
    <source>
        <strain>Bristol N2</strain>
    </source>
</reference>
<reference key="3">
    <citation type="journal article" date="2013" name="Development">
        <title>HECT-E3 ligase ETC-1 regulates securin and cyclin B1 cytoplasmic abundance to promote timely anaphase during meiosis in C. elegans.</title>
        <authorList>
            <person name="Wang R."/>
            <person name="Kaul Z."/>
            <person name="Ambardekar C."/>
            <person name="Yamamoto T.G."/>
            <person name="Kavdia K."/>
            <person name="Kodali K."/>
            <person name="High A.A."/>
            <person name="Kitagawa R."/>
        </authorList>
    </citation>
    <scope>INTERACTION WITH ETC-1</scope>
    <scope>SUBCELLULAR LOCATION</scope>
    <scope>DEVELOPMENTAL STAGE</scope>
    <scope>UBIQUITINATION</scope>
</reference>